<name>VF098_IIV3</name>
<reference key="1">
    <citation type="journal article" date="2006" name="J. Virol.">
        <title>Genome of invertebrate iridescent virus type 3 (mosquito iridescent virus).</title>
        <authorList>
            <person name="Delhon G."/>
            <person name="Tulman E.R."/>
            <person name="Afonso C.L."/>
            <person name="Lu Z."/>
            <person name="Becnel J.J."/>
            <person name="Moser B.A."/>
            <person name="Kutish G.F."/>
            <person name="Rock D.L."/>
        </authorList>
    </citation>
    <scope>NUCLEOTIDE SEQUENCE [LARGE SCALE GENOMIC DNA]</scope>
</reference>
<gene>
    <name type="ORF">IIV3-038R</name>
</gene>
<keyword id="KW-1185">Reference proteome</keyword>
<proteinExistence type="inferred from homology"/>
<organismHost>
    <name type="scientific">Aedes vexans</name>
    <name type="common">Inland floodwater mosquito</name>
    <name type="synonym">Culex vexans</name>
    <dbReference type="NCBI Taxonomy" id="7163"/>
</organismHost>
<organismHost>
    <name type="scientific">Culex territans</name>
    <dbReference type="NCBI Taxonomy" id="42431"/>
</organismHost>
<organismHost>
    <name type="scientific">Culiseta annulata</name>
    <dbReference type="NCBI Taxonomy" id="332058"/>
</organismHost>
<organismHost>
    <name type="scientific">Ochlerotatus sollicitans</name>
    <name type="common">eastern saltmarsh mosquito</name>
    <dbReference type="NCBI Taxonomy" id="310513"/>
</organismHost>
<organismHost>
    <name type="scientific">Ochlerotatus taeniorhynchus</name>
    <name type="common">Black salt marsh mosquito</name>
    <name type="synonym">Aedes taeniorhynchus</name>
    <dbReference type="NCBI Taxonomy" id="329105"/>
</organismHost>
<organismHost>
    <name type="scientific">Psorophora ferox</name>
    <dbReference type="NCBI Taxonomy" id="7183"/>
</organismHost>
<sequence>MDLQYYKIFKQKTSQGMVGLLRPLKKRGSENVFKLRLNHKSTPSATDYFFVQDEPAFPIFVFKIPKEVNYLLDHEFEVSKNMKQLTTYLPHFNTILEIKRDVKCHVPEKLCPQALDDPFAKYNCTRDVAIVEYIPSKTTLLEYILGTNFTRCTDSLIHQLILALFIAQQQVQFSHYDLHLENVLIRRCFKRTFFWYKFSYEHATFQRLILTNGLFPVIFDYGFAHSTNVEGSSYYNSLFFTNKGYTPMVFDDVVDFKTLLIRMAHLYHCPQKFKTLVASNFLKNPQLPYKVDRETGWIKSSDKSIARIVCTQMEEVLKDHLGAEYESNFIYKELEQIIDLFMVLIKLPLVETEFNVKELEYHVGTFVDEWGKIDAWFSHGFTDDKLNILKKIFTLVNELILEQSERSTKTTRQLVKRFQLAVYEILDQFGEFVHVQQLDYGSLFHSIVQLSEFIEHVAYKELTRHQTDYPSGGVTGWSLFTQIEQCTSSVEPYLFRLDDHIVLFDCIDQATSFFELKDVDIVESLNQCGTISNQIRLLDSLDLVDH</sequence>
<dbReference type="EMBL" id="DQ643392">
    <property type="protein sequence ID" value="ABF82068.1"/>
    <property type="molecule type" value="Genomic_DNA"/>
</dbReference>
<dbReference type="RefSeq" id="YP_654610.1">
    <property type="nucleotide sequence ID" value="NC_008187.1"/>
</dbReference>
<dbReference type="KEGG" id="vg:4156348"/>
<dbReference type="OrthoDB" id="5282at10239"/>
<dbReference type="Proteomes" id="UP000001358">
    <property type="component" value="Genome"/>
</dbReference>
<dbReference type="Gene3D" id="1.10.510.10">
    <property type="entry name" value="Transferase(Phosphotransferase) domain 1"/>
    <property type="match status" value="1"/>
</dbReference>
<dbReference type="InterPro" id="IPR011009">
    <property type="entry name" value="Kinase-like_dom_sf"/>
</dbReference>
<dbReference type="SUPFAM" id="SSF56112">
    <property type="entry name" value="Protein kinase-like (PK-like)"/>
    <property type="match status" value="1"/>
</dbReference>
<comment type="similarity">
    <text evidence="1">Belongs to the IIV-6 098R family.</text>
</comment>
<organism>
    <name type="scientific">Invertebrate iridescent virus 3</name>
    <name type="common">IIV-3</name>
    <name type="synonym">Mosquito iridescent virus</name>
    <dbReference type="NCBI Taxonomy" id="345201"/>
    <lineage>
        <taxon>Viruses</taxon>
        <taxon>Varidnaviria</taxon>
        <taxon>Bamfordvirae</taxon>
        <taxon>Nucleocytoviricota</taxon>
        <taxon>Megaviricetes</taxon>
        <taxon>Pimascovirales</taxon>
        <taxon>Iridoviridae</taxon>
        <taxon>Betairidovirinae</taxon>
        <taxon>Chloriridovirus</taxon>
    </lineage>
</organism>
<protein>
    <recommendedName>
        <fullName>Uncharacterized protein 038R</fullName>
    </recommendedName>
</protein>
<evidence type="ECO:0000305" key="1"/>
<feature type="chain" id="PRO_0000377923" description="Uncharacterized protein 038R">
    <location>
        <begin position="1"/>
        <end position="546"/>
    </location>
</feature>
<accession>Q197C2</accession>